<evidence type="ECO:0000255" key="1">
    <source>
        <dbReference type="HAMAP-Rule" id="MF_00253"/>
    </source>
</evidence>
<gene>
    <name evidence="1" type="primary">glyQS</name>
    <name type="ordered locus">Ccel_1789</name>
</gene>
<keyword id="KW-0030">Aminoacyl-tRNA synthetase</keyword>
<keyword id="KW-0067">ATP-binding</keyword>
<keyword id="KW-0963">Cytoplasm</keyword>
<keyword id="KW-0436">Ligase</keyword>
<keyword id="KW-0547">Nucleotide-binding</keyword>
<keyword id="KW-0648">Protein biosynthesis</keyword>
<keyword id="KW-1185">Reference proteome</keyword>
<proteinExistence type="inferred from homology"/>
<name>SYG_RUMCH</name>
<reference key="1">
    <citation type="submission" date="2009-01" db="EMBL/GenBank/DDBJ databases">
        <title>Complete sequence of Clostridium cellulolyticum H10.</title>
        <authorList>
            <consortium name="US DOE Joint Genome Institute"/>
            <person name="Lucas S."/>
            <person name="Copeland A."/>
            <person name="Lapidus A."/>
            <person name="Glavina del Rio T."/>
            <person name="Dalin E."/>
            <person name="Tice H."/>
            <person name="Bruce D."/>
            <person name="Goodwin L."/>
            <person name="Pitluck S."/>
            <person name="Chertkov O."/>
            <person name="Saunders E."/>
            <person name="Brettin T."/>
            <person name="Detter J.C."/>
            <person name="Han C."/>
            <person name="Larimer F."/>
            <person name="Land M."/>
            <person name="Hauser L."/>
            <person name="Kyrpides N."/>
            <person name="Ivanova N."/>
            <person name="Zhou J."/>
            <person name="Richardson P."/>
        </authorList>
    </citation>
    <scope>NUCLEOTIDE SEQUENCE [LARGE SCALE GENOMIC DNA]</scope>
    <source>
        <strain>ATCC 35319 / DSM 5812 / JCM 6584 / H10</strain>
    </source>
</reference>
<accession>B8I2Z6</accession>
<protein>
    <recommendedName>
        <fullName evidence="1">Glycine--tRNA ligase</fullName>
        <ecNumber evidence="1">6.1.1.14</ecNumber>
    </recommendedName>
    <alternativeName>
        <fullName evidence="1">Glycyl-tRNA synthetase</fullName>
        <shortName evidence="1">GlyRS</shortName>
    </alternativeName>
</protein>
<organism>
    <name type="scientific">Ruminiclostridium cellulolyticum (strain ATCC 35319 / DSM 5812 / JCM 6584 / H10)</name>
    <name type="common">Clostridium cellulolyticum</name>
    <dbReference type="NCBI Taxonomy" id="394503"/>
    <lineage>
        <taxon>Bacteria</taxon>
        <taxon>Bacillati</taxon>
        <taxon>Bacillota</taxon>
        <taxon>Clostridia</taxon>
        <taxon>Eubacteriales</taxon>
        <taxon>Oscillospiraceae</taxon>
        <taxon>Ruminiclostridium</taxon>
    </lineage>
</organism>
<feature type="chain" id="PRO_1000125528" description="Glycine--tRNA ligase">
    <location>
        <begin position="1"/>
        <end position="462"/>
    </location>
</feature>
<feature type="binding site" evidence="1">
    <location>
        <position position="100"/>
    </location>
    <ligand>
        <name>substrate</name>
    </ligand>
</feature>
<feature type="binding site" evidence="1">
    <location>
        <position position="174"/>
    </location>
    <ligand>
        <name>substrate</name>
    </ligand>
</feature>
<feature type="binding site" evidence="1">
    <location>
        <begin position="206"/>
        <end position="208"/>
    </location>
    <ligand>
        <name>ATP</name>
        <dbReference type="ChEBI" id="CHEBI:30616"/>
    </ligand>
</feature>
<feature type="binding site" evidence="1">
    <location>
        <begin position="216"/>
        <end position="221"/>
    </location>
    <ligand>
        <name>ATP</name>
        <dbReference type="ChEBI" id="CHEBI:30616"/>
    </ligand>
</feature>
<feature type="binding site" evidence="1">
    <location>
        <begin position="221"/>
        <end position="225"/>
    </location>
    <ligand>
        <name>substrate</name>
    </ligand>
</feature>
<feature type="binding site" evidence="1">
    <location>
        <begin position="290"/>
        <end position="291"/>
    </location>
    <ligand>
        <name>ATP</name>
        <dbReference type="ChEBI" id="CHEBI:30616"/>
    </ligand>
</feature>
<feature type="binding site" evidence="1">
    <location>
        <begin position="330"/>
        <end position="334"/>
    </location>
    <ligand>
        <name>substrate</name>
    </ligand>
</feature>
<feature type="binding site" evidence="1">
    <location>
        <begin position="334"/>
        <end position="337"/>
    </location>
    <ligand>
        <name>ATP</name>
        <dbReference type="ChEBI" id="CHEBI:30616"/>
    </ligand>
</feature>
<comment type="function">
    <text evidence="1">Catalyzes the attachment of glycine to tRNA(Gly).</text>
</comment>
<comment type="catalytic activity">
    <reaction evidence="1">
        <text>tRNA(Gly) + glycine + ATP = glycyl-tRNA(Gly) + AMP + diphosphate</text>
        <dbReference type="Rhea" id="RHEA:16013"/>
        <dbReference type="Rhea" id="RHEA-COMP:9664"/>
        <dbReference type="Rhea" id="RHEA-COMP:9683"/>
        <dbReference type="ChEBI" id="CHEBI:30616"/>
        <dbReference type="ChEBI" id="CHEBI:33019"/>
        <dbReference type="ChEBI" id="CHEBI:57305"/>
        <dbReference type="ChEBI" id="CHEBI:78442"/>
        <dbReference type="ChEBI" id="CHEBI:78522"/>
        <dbReference type="ChEBI" id="CHEBI:456215"/>
        <dbReference type="EC" id="6.1.1.14"/>
    </reaction>
</comment>
<comment type="subunit">
    <text evidence="1">Homodimer.</text>
</comment>
<comment type="subcellular location">
    <subcellularLocation>
        <location evidence="1">Cytoplasm</location>
    </subcellularLocation>
</comment>
<comment type="similarity">
    <text evidence="1">Belongs to the class-II aminoacyl-tRNA synthetase family.</text>
</comment>
<dbReference type="EC" id="6.1.1.14" evidence="1"/>
<dbReference type="EMBL" id="CP001348">
    <property type="protein sequence ID" value="ACL76139.1"/>
    <property type="molecule type" value="Genomic_DNA"/>
</dbReference>
<dbReference type="RefSeq" id="WP_015925254.1">
    <property type="nucleotide sequence ID" value="NC_011898.1"/>
</dbReference>
<dbReference type="SMR" id="B8I2Z6"/>
<dbReference type="STRING" id="394503.Ccel_1789"/>
<dbReference type="KEGG" id="cce:Ccel_1789"/>
<dbReference type="eggNOG" id="COG0423">
    <property type="taxonomic scope" value="Bacteria"/>
</dbReference>
<dbReference type="HOGENOM" id="CLU_015515_2_1_9"/>
<dbReference type="OrthoDB" id="9760853at2"/>
<dbReference type="Proteomes" id="UP000001349">
    <property type="component" value="Chromosome"/>
</dbReference>
<dbReference type="GO" id="GO:0005737">
    <property type="term" value="C:cytoplasm"/>
    <property type="evidence" value="ECO:0007669"/>
    <property type="project" value="UniProtKB-SubCell"/>
</dbReference>
<dbReference type="GO" id="GO:0005524">
    <property type="term" value="F:ATP binding"/>
    <property type="evidence" value="ECO:0007669"/>
    <property type="project" value="UniProtKB-UniRule"/>
</dbReference>
<dbReference type="GO" id="GO:0140096">
    <property type="term" value="F:catalytic activity, acting on a protein"/>
    <property type="evidence" value="ECO:0007669"/>
    <property type="project" value="UniProtKB-ARBA"/>
</dbReference>
<dbReference type="GO" id="GO:0004820">
    <property type="term" value="F:glycine-tRNA ligase activity"/>
    <property type="evidence" value="ECO:0000250"/>
    <property type="project" value="UniProtKB"/>
</dbReference>
<dbReference type="GO" id="GO:0046983">
    <property type="term" value="F:protein dimerization activity"/>
    <property type="evidence" value="ECO:0000250"/>
    <property type="project" value="UniProtKB"/>
</dbReference>
<dbReference type="GO" id="GO:0016740">
    <property type="term" value="F:transferase activity"/>
    <property type="evidence" value="ECO:0007669"/>
    <property type="project" value="UniProtKB-ARBA"/>
</dbReference>
<dbReference type="GO" id="GO:0006426">
    <property type="term" value="P:glycyl-tRNA aminoacylation"/>
    <property type="evidence" value="ECO:0007669"/>
    <property type="project" value="UniProtKB-UniRule"/>
</dbReference>
<dbReference type="CDD" id="cd00774">
    <property type="entry name" value="GlyRS-like_core"/>
    <property type="match status" value="1"/>
</dbReference>
<dbReference type="CDD" id="cd00858">
    <property type="entry name" value="GlyRS_anticodon"/>
    <property type="match status" value="1"/>
</dbReference>
<dbReference type="FunFam" id="3.40.50.800:FF:000002">
    <property type="entry name" value="Glycine--tRNA ligase"/>
    <property type="match status" value="1"/>
</dbReference>
<dbReference type="Gene3D" id="3.40.50.800">
    <property type="entry name" value="Anticodon-binding domain"/>
    <property type="match status" value="1"/>
</dbReference>
<dbReference type="Gene3D" id="3.30.930.10">
    <property type="entry name" value="Bira Bifunctional Protein, Domain 2"/>
    <property type="match status" value="1"/>
</dbReference>
<dbReference type="HAMAP" id="MF_00253_B">
    <property type="entry name" value="Gly_tRNA_synth_B"/>
    <property type="match status" value="1"/>
</dbReference>
<dbReference type="InterPro" id="IPR002314">
    <property type="entry name" value="aa-tRNA-synt_IIb"/>
</dbReference>
<dbReference type="InterPro" id="IPR006195">
    <property type="entry name" value="aa-tRNA-synth_II"/>
</dbReference>
<dbReference type="InterPro" id="IPR045864">
    <property type="entry name" value="aa-tRNA-synth_II/BPL/LPL"/>
</dbReference>
<dbReference type="InterPro" id="IPR004154">
    <property type="entry name" value="Anticodon-bd"/>
</dbReference>
<dbReference type="InterPro" id="IPR036621">
    <property type="entry name" value="Anticodon-bd_dom_sf"/>
</dbReference>
<dbReference type="InterPro" id="IPR027031">
    <property type="entry name" value="Gly-tRNA_synthase/POLG2"/>
</dbReference>
<dbReference type="InterPro" id="IPR022961">
    <property type="entry name" value="Gly_tRNA_ligase_bac"/>
</dbReference>
<dbReference type="InterPro" id="IPR033731">
    <property type="entry name" value="GlyRS-like_core"/>
</dbReference>
<dbReference type="InterPro" id="IPR002315">
    <property type="entry name" value="tRNA-synt_gly"/>
</dbReference>
<dbReference type="NCBIfam" id="TIGR00389">
    <property type="entry name" value="glyS_dimeric"/>
    <property type="match status" value="1"/>
</dbReference>
<dbReference type="NCBIfam" id="NF003211">
    <property type="entry name" value="PRK04173.1"/>
    <property type="match status" value="1"/>
</dbReference>
<dbReference type="PANTHER" id="PTHR10745:SF8">
    <property type="entry name" value="DNA POLYMERASE SUBUNIT GAMMA-2, MITOCHONDRIAL"/>
    <property type="match status" value="1"/>
</dbReference>
<dbReference type="PANTHER" id="PTHR10745">
    <property type="entry name" value="GLYCYL-TRNA SYNTHETASE/DNA POLYMERASE SUBUNIT GAMMA-2"/>
    <property type="match status" value="1"/>
</dbReference>
<dbReference type="Pfam" id="PF03129">
    <property type="entry name" value="HGTP_anticodon"/>
    <property type="match status" value="1"/>
</dbReference>
<dbReference type="Pfam" id="PF00587">
    <property type="entry name" value="tRNA-synt_2b"/>
    <property type="match status" value="1"/>
</dbReference>
<dbReference type="PRINTS" id="PR01043">
    <property type="entry name" value="TRNASYNTHGLY"/>
</dbReference>
<dbReference type="SUPFAM" id="SSF52954">
    <property type="entry name" value="Class II aaRS ABD-related"/>
    <property type="match status" value="1"/>
</dbReference>
<dbReference type="SUPFAM" id="SSF55681">
    <property type="entry name" value="Class II aaRS and biotin synthetases"/>
    <property type="match status" value="1"/>
</dbReference>
<dbReference type="PROSITE" id="PS50862">
    <property type="entry name" value="AA_TRNA_LIGASE_II"/>
    <property type="match status" value="1"/>
</dbReference>
<sequence>MAAEKTMEKIVALAKNRGFVYPGSDIYGGLANAWDYGPLGVELKNNVKKAWWLKFIQESPYNVGVDCAILMNPQVWVASGHVGGFSDPLIDCKDCKTRHRADKLIEDWNNENNIEFRVDGLKNEELMQYIKDKGVRCPSCGSANFTDIRKFNLMFKTFQGVTEDSKSEIYLRPETAQGIFVNFKNVQRTTRRKIPFGIGQIGKSFRNEITPGNFTFRTREFEQMELEFFCEPGKDLEWFKYWKDFCYNWLLSLNMKKENLKLRDHEKEELSHYSNATTDIEFLFPFGWGELWGIADRTDFDLKQHMTHSKDDLSYFDPTTNEKYVPYCIEPSLGADRVTLAFLCEAYDEEEVAEGDVRTVLRFHPALAPVKIAVLPLSKKLGEDADKVYQMLAKSYYCEYDETGSIGKRYRRQDEIGTPYCITFDFDSLEDKSVTIRDRDTMQQVRIKIEDLAAYFENKFEF</sequence>